<feature type="chain" id="PRO_0000391377" description="F-box/WD repeat-containing protein 2">
    <location>
        <begin position="1"/>
        <end position="454"/>
    </location>
</feature>
<feature type="domain" description="F-box" evidence="4">
    <location>
        <begin position="54"/>
        <end position="101"/>
    </location>
</feature>
<feature type="repeat" description="WD 1" evidence="3">
    <location>
        <begin position="146"/>
        <end position="183"/>
    </location>
</feature>
<feature type="repeat" description="WD 2" evidence="3">
    <location>
        <begin position="185"/>
        <end position="221"/>
    </location>
</feature>
<feature type="repeat" description="WD 3" evidence="3">
    <location>
        <begin position="224"/>
        <end position="265"/>
    </location>
</feature>
<feature type="repeat" description="WD 4" evidence="3">
    <location>
        <begin position="276"/>
        <end position="314"/>
    </location>
</feature>
<feature type="modified residue" description="N6-acetyllysine" evidence="2">
    <location>
        <position position="298"/>
    </location>
</feature>
<evidence type="ECO:0000250" key="1"/>
<evidence type="ECO:0000250" key="2">
    <source>
        <dbReference type="UniProtKB" id="Q9UKT8"/>
    </source>
</evidence>
<evidence type="ECO:0000255" key="3"/>
<evidence type="ECO:0000255" key="4">
    <source>
        <dbReference type="PROSITE-ProRule" id="PRU00080"/>
    </source>
</evidence>
<evidence type="ECO:0000312" key="5">
    <source>
        <dbReference type="EMBL" id="AAI66990.1"/>
    </source>
</evidence>
<evidence type="ECO:0000312" key="6">
    <source>
        <dbReference type="EMBL" id="EDL93165.1"/>
    </source>
</evidence>
<evidence type="ECO:0000312" key="7">
    <source>
        <dbReference type="RGD" id="1310460"/>
    </source>
</evidence>
<protein>
    <recommendedName>
        <fullName>F-box/WD repeat-containing protein 2</fullName>
    </recommendedName>
    <alternativeName>
        <fullName evidence="5">F-box and WD-40 domain-containing protein 2</fullName>
    </alternativeName>
    <alternativeName>
        <fullName evidence="2">Protein MD6</fullName>
    </alternativeName>
</protein>
<dbReference type="EMBL" id="CH474001">
    <property type="protein sequence ID" value="EDL93165.1"/>
    <property type="molecule type" value="Genomic_DNA"/>
</dbReference>
<dbReference type="EMBL" id="CH474001">
    <property type="protein sequence ID" value="EDL93166.1"/>
    <property type="molecule type" value="Genomic_DNA"/>
</dbReference>
<dbReference type="EMBL" id="BC166990">
    <property type="protein sequence ID" value="AAI66990.1"/>
    <property type="molecule type" value="mRNA"/>
</dbReference>
<dbReference type="RefSeq" id="NP_001101305.1">
    <property type="nucleotide sequence ID" value="NM_001107835.2"/>
</dbReference>
<dbReference type="RefSeq" id="XP_006234039.1">
    <property type="nucleotide sequence ID" value="XM_006233977.3"/>
</dbReference>
<dbReference type="RefSeq" id="XP_008759973.1">
    <property type="nucleotide sequence ID" value="XM_008761751.2"/>
</dbReference>
<dbReference type="RefSeq" id="XP_008759974.1">
    <property type="nucleotide sequence ID" value="XM_008761752.2"/>
</dbReference>
<dbReference type="SMR" id="B2RZ17"/>
<dbReference type="FunCoup" id="B2RZ17">
    <property type="interactions" value="3276"/>
</dbReference>
<dbReference type="STRING" id="10116.ENSRNOP00000025399"/>
<dbReference type="iPTMnet" id="B2RZ17"/>
<dbReference type="PhosphoSitePlus" id="B2RZ17"/>
<dbReference type="PaxDb" id="10116-ENSRNOP00000025399"/>
<dbReference type="PeptideAtlas" id="B2RZ17"/>
<dbReference type="GeneID" id="311881"/>
<dbReference type="KEGG" id="rno:311881"/>
<dbReference type="UCSC" id="RGD:1310460">
    <property type="organism name" value="rat"/>
</dbReference>
<dbReference type="AGR" id="RGD:1310460"/>
<dbReference type="CTD" id="26190"/>
<dbReference type="RGD" id="1310460">
    <property type="gene designation" value="Fbxw2"/>
</dbReference>
<dbReference type="VEuPathDB" id="HostDB:ENSRNOG00000018687"/>
<dbReference type="eggNOG" id="KOG0274">
    <property type="taxonomic scope" value="Eukaryota"/>
</dbReference>
<dbReference type="HOGENOM" id="CLU_041488_0_0_1"/>
<dbReference type="InParanoid" id="B2RZ17"/>
<dbReference type="OrthoDB" id="538223at2759"/>
<dbReference type="PhylomeDB" id="B2RZ17"/>
<dbReference type="TreeFam" id="TF333134"/>
<dbReference type="Reactome" id="R-RNO-8951664">
    <property type="pathway name" value="Neddylation"/>
</dbReference>
<dbReference type="Reactome" id="R-RNO-983168">
    <property type="pathway name" value="Antigen processing: Ubiquitination &amp; Proteasome degradation"/>
</dbReference>
<dbReference type="PRO" id="PR:B2RZ17"/>
<dbReference type="Proteomes" id="UP000002494">
    <property type="component" value="Chromosome 3"/>
</dbReference>
<dbReference type="Proteomes" id="UP000234681">
    <property type="component" value="Chromosome 3"/>
</dbReference>
<dbReference type="Bgee" id="ENSRNOG00000018687">
    <property type="expression patterns" value="Expressed in lung and 19 other cell types or tissues"/>
</dbReference>
<dbReference type="GO" id="GO:0005737">
    <property type="term" value="C:cytoplasm"/>
    <property type="evidence" value="ECO:0000266"/>
    <property type="project" value="RGD"/>
</dbReference>
<dbReference type="CDD" id="cd22131">
    <property type="entry name" value="F-box_FBXW2"/>
    <property type="match status" value="1"/>
</dbReference>
<dbReference type="FunFam" id="2.130.10.10:FF:000151">
    <property type="entry name" value="F-box/WD repeat-containing protein 2 isoform X1"/>
    <property type="match status" value="1"/>
</dbReference>
<dbReference type="Gene3D" id="1.20.1280.50">
    <property type="match status" value="1"/>
</dbReference>
<dbReference type="Gene3D" id="2.130.10.10">
    <property type="entry name" value="YVTN repeat-like/Quinoprotein amine dehydrogenase"/>
    <property type="match status" value="1"/>
</dbReference>
<dbReference type="InterPro" id="IPR036047">
    <property type="entry name" value="F-box-like_dom_sf"/>
</dbReference>
<dbReference type="InterPro" id="IPR001810">
    <property type="entry name" value="F-box_dom"/>
</dbReference>
<dbReference type="InterPro" id="IPR042627">
    <property type="entry name" value="FBXW2"/>
</dbReference>
<dbReference type="InterPro" id="IPR020472">
    <property type="entry name" value="G-protein_beta_WD-40_rep"/>
</dbReference>
<dbReference type="InterPro" id="IPR015943">
    <property type="entry name" value="WD40/YVTN_repeat-like_dom_sf"/>
</dbReference>
<dbReference type="InterPro" id="IPR019775">
    <property type="entry name" value="WD40_repeat_CS"/>
</dbReference>
<dbReference type="InterPro" id="IPR036322">
    <property type="entry name" value="WD40_repeat_dom_sf"/>
</dbReference>
<dbReference type="InterPro" id="IPR001680">
    <property type="entry name" value="WD40_rpt"/>
</dbReference>
<dbReference type="PANTHER" id="PTHR44436">
    <property type="entry name" value="F-BOX/WD REPEAT-CONTAINING PROTEIN 2"/>
    <property type="match status" value="1"/>
</dbReference>
<dbReference type="PANTHER" id="PTHR44436:SF1">
    <property type="entry name" value="F-BOX_WD REPEAT-CONTAINING PROTEIN 2"/>
    <property type="match status" value="1"/>
</dbReference>
<dbReference type="Pfam" id="PF12937">
    <property type="entry name" value="F-box-like"/>
    <property type="match status" value="1"/>
</dbReference>
<dbReference type="Pfam" id="PF00400">
    <property type="entry name" value="WD40"/>
    <property type="match status" value="3"/>
</dbReference>
<dbReference type="PRINTS" id="PR00320">
    <property type="entry name" value="GPROTEINBRPT"/>
</dbReference>
<dbReference type="SMART" id="SM00256">
    <property type="entry name" value="FBOX"/>
    <property type="match status" value="1"/>
</dbReference>
<dbReference type="SMART" id="SM00320">
    <property type="entry name" value="WD40"/>
    <property type="match status" value="5"/>
</dbReference>
<dbReference type="SUPFAM" id="SSF81383">
    <property type="entry name" value="F-box domain"/>
    <property type="match status" value="1"/>
</dbReference>
<dbReference type="SUPFAM" id="SSF50978">
    <property type="entry name" value="WD40 repeat-like"/>
    <property type="match status" value="1"/>
</dbReference>
<dbReference type="PROSITE" id="PS50181">
    <property type="entry name" value="FBOX"/>
    <property type="match status" value="1"/>
</dbReference>
<dbReference type="PROSITE" id="PS00678">
    <property type="entry name" value="WD_REPEATS_1"/>
    <property type="match status" value="1"/>
</dbReference>
<dbReference type="PROSITE" id="PS50082">
    <property type="entry name" value="WD_REPEATS_2"/>
    <property type="match status" value="2"/>
</dbReference>
<dbReference type="PROSITE" id="PS50294">
    <property type="entry name" value="WD_REPEATS_REGION"/>
    <property type="match status" value="1"/>
</dbReference>
<name>FBXW2_RAT</name>
<accession>B2RZ17</accession>
<keyword id="KW-0007">Acetylation</keyword>
<keyword id="KW-1185">Reference proteome</keyword>
<keyword id="KW-0677">Repeat</keyword>
<keyword id="KW-0833">Ubl conjugation pathway</keyword>
<keyword id="KW-0853">WD repeat</keyword>
<gene>
    <name evidence="7" type="primary">Fbxw2</name>
</gene>
<sequence length="454" mass="51408">MERKDFETWLDNISVTFLSLTDLQKNETLDHLISLSGAVQLRHLSNNLETLLKRDFLKLLPLELSFYLLKWLDPQTLLTCCLVSKQWNKVISACTEVWQTACKNLGWQIDDSVQDALHWKKVYLKAILRMKQLEDHEAFETSSLIGHSARVYALYYKDGLLCTGSDDLSAKLWDVSTGQCVYGIQTHTCAAVKFDEQKLVTGSFDNTVACWEWSSGARTQHFRGHTGAVFSVDYSDELDILVSGSADFAVKVWALSAGTCLNTLTGHTEWVTKVVLQQCKVKSLLHSPGDYILLSADKYEIKIWPIGREINCKCLKTLSVSEDRSICLQPRLHFDGKYIVCSSALGLYQWDFASYDILRVIKTPEVANLALLGFGDVFALLFDNHYLYIMDLRTESLISRWPLPEYRKSKRGSSFLAGEASWLNGLDGHNDTGLVFATSMPDHSIHLVLWKEHG</sequence>
<proteinExistence type="evidence at transcript level"/>
<reference evidence="6" key="1">
    <citation type="submission" date="2005-09" db="EMBL/GenBank/DDBJ databases">
        <authorList>
            <person name="Mural R.J."/>
            <person name="Adams M.D."/>
            <person name="Myers E.W."/>
            <person name="Smith H.O."/>
            <person name="Venter J.C."/>
        </authorList>
    </citation>
    <scope>NUCLEOTIDE SEQUENCE [LARGE SCALE GENOMIC DNA]</scope>
</reference>
<reference evidence="5" key="2">
    <citation type="journal article" date="2004" name="Genome Res.">
        <title>The status, quality, and expansion of the NIH full-length cDNA project: the Mammalian Gene Collection (MGC).</title>
        <authorList>
            <consortium name="The MGC Project Team"/>
        </authorList>
    </citation>
    <scope>NUCLEOTIDE SEQUENCE [LARGE SCALE MRNA]</scope>
    <source>
        <strain evidence="5">Brown Norway</strain>
        <tissue evidence="5">Kidney</tissue>
    </source>
</reference>
<organism>
    <name type="scientific">Rattus norvegicus</name>
    <name type="common">Rat</name>
    <dbReference type="NCBI Taxonomy" id="10116"/>
    <lineage>
        <taxon>Eukaryota</taxon>
        <taxon>Metazoa</taxon>
        <taxon>Chordata</taxon>
        <taxon>Craniata</taxon>
        <taxon>Vertebrata</taxon>
        <taxon>Euteleostomi</taxon>
        <taxon>Mammalia</taxon>
        <taxon>Eutheria</taxon>
        <taxon>Euarchontoglires</taxon>
        <taxon>Glires</taxon>
        <taxon>Rodentia</taxon>
        <taxon>Myomorpha</taxon>
        <taxon>Muroidea</taxon>
        <taxon>Muridae</taxon>
        <taxon>Murinae</taxon>
        <taxon>Rattus</taxon>
    </lineage>
</organism>
<comment type="function">
    <text evidence="2">Substrate-recognition component of the SCF (SKP1-CUL1-F-box protein)-type E3 ubiquitin ligase complex.</text>
</comment>
<comment type="subunit">
    <text evidence="1">Directly interacts with SKP1 and CUL1.</text>
</comment>